<organismHost>
    <name type="scientific">Pyrobaculum arsenaticum</name>
    <dbReference type="NCBI Taxonomy" id="121277"/>
</organismHost>
<organismHost>
    <name type="scientific">Pyrobaculum oguniense</name>
    <dbReference type="NCBI Taxonomy" id="99007"/>
</organismHost>
<organism>
    <name type="scientific">Pyrobaculum filamentous virus 2</name>
    <name type="common">PFV2</name>
    <dbReference type="NCBI Taxonomy" id="2730621"/>
    <lineage>
        <taxon>Viruses</taxon>
        <taxon>Adnaviria</taxon>
        <taxon>Zilligvirae</taxon>
        <taxon>Taleaviricota</taxon>
        <taxon>Tokiviricetes</taxon>
        <taxon>Primavirales</taxon>
        <taxon>Tristromaviridae</taxon>
        <taxon>Alphatristromavirus</taxon>
        <taxon>Alphatristromavirus puteoliense</taxon>
    </lineage>
</organism>
<reference evidence="6 7" key="1">
    <citation type="journal article" date="2020" name="ISME J.">
        <title>New virus isolates from Italian hydrothermal environments underscore the biogeographic pattern in archaeal virus communities.</title>
        <authorList>
            <person name="Baquero D.P."/>
            <person name="Contursi P."/>
            <person name="Piochi M."/>
            <person name="Bartolucci S."/>
            <person name="Liu Y."/>
            <person name="Cvirkaite-Krupovic V."/>
            <person name="Prangishvili D."/>
            <person name="Krupovic M."/>
        </authorList>
    </citation>
    <scope>NUCLEOTIDE SEQUENCE [LARGE SCALE GENOMIC DNA]</scope>
    <source>
        <strain evidence="6">4</strain>
    </source>
</reference>
<reference key="2">
    <citation type="journal article" date="2020" name="Proc. Natl. Acad. Sci. U.S.A.">
        <title>Structures of filamentous viruses infecting hyperthermophilic archaea explain DNA stabilization in extreme environments.</title>
        <authorList>
            <person name="Wang F."/>
            <person name="Baquero D.P."/>
            <person name="Beltran L.C."/>
            <person name="Su Z."/>
            <person name="Osinski T."/>
            <person name="Zheng W."/>
            <person name="Prangishvili D."/>
            <person name="Krupovic M."/>
            <person name="Egelman E.H."/>
        </authorList>
    </citation>
    <scope>SUBUNIT</scope>
    <scope>FUNCTION</scope>
</reference>
<reference evidence="8" key="3">
    <citation type="journal article" date="2020" name="Virus Evol.">
        <title>Structure of a filamentous virus uncovers familial ties within the archaeal virosphere.</title>
        <authorList>
            <person name="Wang F."/>
            <person name="Baquero D.P."/>
            <person name="Su Z."/>
            <person name="Osinski T."/>
            <person name="Prangishvili D."/>
            <person name="Egelman E.H."/>
            <person name="Krupovic M."/>
        </authorList>
    </citation>
    <scope>STRUCTURE BY ELECTRON MICROSCOPY (3.40 ANGSTROMS)</scope>
    <scope>DISULFIDE BONDS</scope>
    <scope>SUBCELLULAR LOCATION</scope>
    <scope>FUNCTION</scope>
</reference>
<keyword id="KW-0002">3D-structure</keyword>
<keyword id="KW-1015">Disulfide bond</keyword>
<keyword id="KW-0238">DNA-binding</keyword>
<keyword id="KW-1185">Reference proteome</keyword>
<keyword id="KW-0946">Virion</keyword>
<name>CAPS2_PFV2</name>
<sequence length="145" mass="15307">MSVEVYRQKIEKGGYSAAYEATRRYEREEIEVLSWSSRWESAWSKFGEAVKALGKIEGAPRALVIAKVQEALAYMSKPLPNMKLAMAAAVQAVRACEQLPGMNRERCLDAVAGALGVAKDWIRREMTGGGGGGGGGGGGGGGAVV</sequence>
<proteinExistence type="evidence at protein level"/>
<protein>
    <recommendedName>
        <fullName evidence="4">Major capsid protein 2</fullName>
    </recommendedName>
    <alternativeName>
        <fullName evidence="4">MCP2</fullName>
    </alternativeName>
    <alternativeName>
        <fullName evidence="1">Major capsid protein VP2</fullName>
    </alternativeName>
</protein>
<comment type="function">
    <text evidence="2 5">Self-assembles to form a helical, filamentous nucleocapsid (Probable) (PubMed:32368353). Together with capsid protein 2, wraps arounds the DNA and maintains it in an A-form (Probable). Capsid proteins probably maintain the DNA in A-form by non-specific desolvation and specific coordination of the DNA phosphate groups by positively charged residues (Probable). This certainly protects the viral DNA under conditions such as the extreme desiccation of its host (Probable).</text>
</comment>
<comment type="subunit">
    <text evidence="3">Heterodimer composed of major capsid protein 1 and major capsid protein 2.</text>
</comment>
<comment type="subcellular location">
    <subcellularLocation>
        <location evidence="2">Virion</location>
    </subcellularLocation>
</comment>
<dbReference type="EMBL" id="MN876844">
    <property type="protein sequence ID" value="QJF12394.1"/>
    <property type="molecule type" value="Genomic_DNA"/>
</dbReference>
<dbReference type="PDB" id="6V7B">
    <property type="method" value="EM"/>
    <property type="resolution" value="3.40 A"/>
    <property type="chains" value="a/b/c/d/e/f/g/h/i/j/k/l/m/n/o/p/q/r/s/t/u/v/w=1-145"/>
</dbReference>
<dbReference type="PDBsum" id="6V7B"/>
<dbReference type="SMR" id="A0A6M3VWZ7"/>
<dbReference type="Proteomes" id="UP000502572">
    <property type="component" value="Genome"/>
</dbReference>
<dbReference type="GO" id="GO:0019029">
    <property type="term" value="C:helical viral capsid"/>
    <property type="evidence" value="ECO:0000314"/>
    <property type="project" value="UniProtKB"/>
</dbReference>
<dbReference type="GO" id="GO:0003677">
    <property type="term" value="F:DNA binding"/>
    <property type="evidence" value="ECO:0000314"/>
    <property type="project" value="UniProtKB"/>
</dbReference>
<feature type="chain" id="PRO_0000453883" description="Major capsid protein 2">
    <location>
        <begin position="1"/>
        <end position="145"/>
    </location>
</feature>
<feature type="disulfide bond" evidence="2">
    <location>
        <begin position="96"/>
        <end position="107"/>
    </location>
</feature>
<feature type="helix" evidence="9">
    <location>
        <begin position="4"/>
        <end position="10"/>
    </location>
</feature>
<feature type="helix" evidence="9">
    <location>
        <begin position="14"/>
        <end position="26"/>
    </location>
</feature>
<feature type="helix" evidence="9">
    <location>
        <begin position="34"/>
        <end position="51"/>
    </location>
</feature>
<feature type="turn" evidence="9">
    <location>
        <begin position="52"/>
        <end position="55"/>
    </location>
</feature>
<feature type="helix" evidence="9">
    <location>
        <begin position="62"/>
        <end position="75"/>
    </location>
</feature>
<feature type="strand" evidence="9">
    <location>
        <begin position="77"/>
        <end position="79"/>
    </location>
</feature>
<feature type="helix" evidence="9">
    <location>
        <begin position="82"/>
        <end position="96"/>
    </location>
</feature>
<feature type="helix" evidence="9">
    <location>
        <begin position="104"/>
        <end position="115"/>
    </location>
</feature>
<feature type="helix" evidence="9">
    <location>
        <begin position="119"/>
        <end position="126"/>
    </location>
</feature>
<gene>
    <name evidence="6" type="ORF">PFV2_gp21</name>
</gene>
<accession>A0A6M3VWZ7</accession>
<evidence type="ECO:0000250" key="1">
    <source>
        <dbReference type="UniProtKB" id="A0A140F3K7"/>
    </source>
</evidence>
<evidence type="ECO:0000269" key="2">
    <source>
    </source>
</evidence>
<evidence type="ECO:0000269" key="3">
    <source>
    </source>
</evidence>
<evidence type="ECO:0000303" key="4">
    <source>
    </source>
</evidence>
<evidence type="ECO:0000305" key="5">
    <source>
    </source>
</evidence>
<evidence type="ECO:0000312" key="6">
    <source>
        <dbReference type="EMBL" id="QJF12394.1"/>
    </source>
</evidence>
<evidence type="ECO:0000312" key="7">
    <source>
        <dbReference type="Proteomes" id="UP000502572"/>
    </source>
</evidence>
<evidence type="ECO:0007744" key="8">
    <source>
        <dbReference type="PDB" id="6V7B"/>
    </source>
</evidence>
<evidence type="ECO:0007829" key="9">
    <source>
        <dbReference type="PDB" id="6V7B"/>
    </source>
</evidence>